<proteinExistence type="inferred from homology"/>
<protein>
    <recommendedName>
        <fullName evidence="1">DNA-directed RNA polymerase subunit beta</fullName>
        <shortName evidence="1">RNAP subunit beta</shortName>
        <ecNumber evidence="1">2.7.7.6</ecNumber>
    </recommendedName>
    <alternativeName>
        <fullName evidence="1">RNA polymerase subunit beta</fullName>
    </alternativeName>
    <alternativeName>
        <fullName evidence="1">Transcriptase subunit beta</fullName>
    </alternativeName>
</protein>
<evidence type="ECO:0000255" key="1">
    <source>
        <dbReference type="HAMAP-Rule" id="MF_01321"/>
    </source>
</evidence>
<keyword id="KW-0240">DNA-directed RNA polymerase</keyword>
<keyword id="KW-0548">Nucleotidyltransferase</keyword>
<keyword id="KW-1185">Reference proteome</keyword>
<keyword id="KW-0804">Transcription</keyword>
<keyword id="KW-0808">Transferase</keyword>
<accession>A9GRB1</accession>
<gene>
    <name evidence="1" type="primary">rpoB</name>
    <name type="ordered locus">sce0410</name>
</gene>
<sequence>MPSVVQSNFRVRKNLGRVRRIIDVPNLIDIQKSSYDKFLQMSVPPNEREEVGLQAVFRSVFPIKDFNGTSELVFVSYNLEPPKYDVDECRQRGMTYSAPIKVTNQLMIYDTRDGGERIVRDIKEQEVYFGELPLMTETGTFIINGTERVVVSQLHRSPGVFFDHDKGKTHSSGKLLYSARVIPYRGSWLDFEFDPKDIIYVRIDRRRKMHATVLLRALGYSTQDLLNYFYSTETVYLEKGGKYAKSIEYDLLAGQRTTRDIKIGNDVIVKKNTKFTRAAIRKMKEAKLERLSLEPEELVGKVAAHDIVDPETGEVVVEVNEELTEAKLERLRDANIEQFRILFIDGLNVGSYLRDTLLTDKVKTMEDSILEIYRRLRPGDPPTLETAKTLFHNLFFNAERYDLSKVGRLKLNYKFYRDVPEDERPGLDLTVLTPQDILETVRHLIELKNGRGSVDDIDHLGNRRVRAVGELMENQYRIGLVRMERAIKERMSMSQEIDTLMPHDLINAKPVSAVVKEYFGSSQLSQFMDQTNPLSEVTHKRRLSALGPGGLTRERAGFEVRDVHATHYGRICPIETPEGPNIGLIASLSTFARVNEFGFVETPYRKVENGRVTEDVIWLSALEEEGKYIAQATVNLDEGGRFKESLVSARYNGEFKIVTPEMVELMDVAPNQMVSVAAALVPFLEHDDANRALMGANMQRQAVPLVQSHAPLVGTGMEERLARDSGVCVIARRPGVVESVDATRIVVRAEGEGAEVPDIYHLMKFQRSNQSTCYTQKPVVRTGEVVKKGDVLADGPSTDMGELALGQNVLVAFMPWQGYNFEDSILVSERIAKDDVFTSIHIEEFECVARDTKLGKEEITRDIPNVGEEALKDLDDSGIVRIGAEVRPGDILVGKITPKGETQLSPEEKLLRAIFGEKAGDVRDSSLKVPPGVGGIVINARVFSRKGTEKDDRARDIEDQERARIERTRDEEIKILRDSFFRRIRELLLGKEATGKLVDDKGKVLFQKGAIIDEPSLAEIPRKYWGEIPVDDAERVQQILRDLEELVRTREEHFRDKIDRLSKGDELPPGVIKMVKVYIAIKRKLQVGDKMAGRHGNKGVISRILPEEDMPYLQDGRPVDLVLNPLGVPSRMNVGQILEIHLGWGAFELGNQLQRMIEQQRASAEIKEHLKAIYAGDETMNGFFDNLDDGDVKRFVKTVDEGVFMGSPVFDGAHESDIKGALDLAGLPTSGQAILFDGRTGDAFDQNVTVGIMYMLKLHHLVDDKIHARSIGPYSLVTQQPLGGKAQFGGQRLGEMEVWAMEAYGAAYALQEFLTVKSDDVMGRTRMYEAIVKGDYTLEAGLPESFNVLIKELQSLCLNVELVETSAGVEASAAEEEE</sequence>
<reference key="1">
    <citation type="journal article" date="2007" name="Nat. Biotechnol.">
        <title>Complete genome sequence of the myxobacterium Sorangium cellulosum.</title>
        <authorList>
            <person name="Schneiker S."/>
            <person name="Perlova O."/>
            <person name="Kaiser O."/>
            <person name="Gerth K."/>
            <person name="Alici A."/>
            <person name="Altmeyer M.O."/>
            <person name="Bartels D."/>
            <person name="Bekel T."/>
            <person name="Beyer S."/>
            <person name="Bode E."/>
            <person name="Bode H.B."/>
            <person name="Bolten C.J."/>
            <person name="Choudhuri J.V."/>
            <person name="Doss S."/>
            <person name="Elnakady Y.A."/>
            <person name="Frank B."/>
            <person name="Gaigalat L."/>
            <person name="Goesmann A."/>
            <person name="Groeger C."/>
            <person name="Gross F."/>
            <person name="Jelsbak L."/>
            <person name="Jelsbak L."/>
            <person name="Kalinowski J."/>
            <person name="Kegler C."/>
            <person name="Knauber T."/>
            <person name="Konietzny S."/>
            <person name="Kopp M."/>
            <person name="Krause L."/>
            <person name="Krug D."/>
            <person name="Linke B."/>
            <person name="Mahmud T."/>
            <person name="Martinez-Arias R."/>
            <person name="McHardy A.C."/>
            <person name="Merai M."/>
            <person name="Meyer F."/>
            <person name="Mormann S."/>
            <person name="Munoz-Dorado J."/>
            <person name="Perez J."/>
            <person name="Pradella S."/>
            <person name="Rachid S."/>
            <person name="Raddatz G."/>
            <person name="Rosenau F."/>
            <person name="Rueckert C."/>
            <person name="Sasse F."/>
            <person name="Scharfe M."/>
            <person name="Schuster S.C."/>
            <person name="Suen G."/>
            <person name="Treuner-Lange A."/>
            <person name="Velicer G.J."/>
            <person name="Vorholter F.-J."/>
            <person name="Weissman K.J."/>
            <person name="Welch R.D."/>
            <person name="Wenzel S.C."/>
            <person name="Whitworth D.E."/>
            <person name="Wilhelm S."/>
            <person name="Wittmann C."/>
            <person name="Bloecker H."/>
            <person name="Puehler A."/>
            <person name="Mueller R."/>
        </authorList>
    </citation>
    <scope>NUCLEOTIDE SEQUENCE [LARGE SCALE GENOMIC DNA]</scope>
    <source>
        <strain>So ce56</strain>
    </source>
</reference>
<comment type="function">
    <text evidence="1">DNA-dependent RNA polymerase catalyzes the transcription of DNA into RNA using the four ribonucleoside triphosphates as substrates.</text>
</comment>
<comment type="catalytic activity">
    <reaction evidence="1">
        <text>RNA(n) + a ribonucleoside 5'-triphosphate = RNA(n+1) + diphosphate</text>
        <dbReference type="Rhea" id="RHEA:21248"/>
        <dbReference type="Rhea" id="RHEA-COMP:14527"/>
        <dbReference type="Rhea" id="RHEA-COMP:17342"/>
        <dbReference type="ChEBI" id="CHEBI:33019"/>
        <dbReference type="ChEBI" id="CHEBI:61557"/>
        <dbReference type="ChEBI" id="CHEBI:140395"/>
        <dbReference type="EC" id="2.7.7.6"/>
    </reaction>
</comment>
<comment type="subunit">
    <text evidence="1">The RNAP catalytic core consists of 2 alpha, 1 beta, 1 beta' and 1 omega subunit. When a sigma factor is associated with the core the holoenzyme is formed, which can initiate transcription.</text>
</comment>
<comment type="similarity">
    <text evidence="1">Belongs to the RNA polymerase beta chain family.</text>
</comment>
<feature type="chain" id="PRO_1000086383" description="DNA-directed RNA polymerase subunit beta">
    <location>
        <begin position="1"/>
        <end position="1378"/>
    </location>
</feature>
<name>RPOB_SORC5</name>
<dbReference type="EC" id="2.7.7.6" evidence="1"/>
<dbReference type="EMBL" id="AM746676">
    <property type="protein sequence ID" value="CAN90567.1"/>
    <property type="molecule type" value="Genomic_DNA"/>
</dbReference>
<dbReference type="RefSeq" id="WP_012233045.1">
    <property type="nucleotide sequence ID" value="NC_010162.1"/>
</dbReference>
<dbReference type="SMR" id="A9GRB1"/>
<dbReference type="STRING" id="448385.sce0410"/>
<dbReference type="KEGG" id="scl:sce0410"/>
<dbReference type="eggNOG" id="COG0085">
    <property type="taxonomic scope" value="Bacteria"/>
</dbReference>
<dbReference type="HOGENOM" id="CLU_000524_4_0_7"/>
<dbReference type="OrthoDB" id="9803954at2"/>
<dbReference type="BioCyc" id="SCEL448385:SCE_RS02160-MONOMER"/>
<dbReference type="Proteomes" id="UP000002139">
    <property type="component" value="Chromosome"/>
</dbReference>
<dbReference type="GO" id="GO:0000428">
    <property type="term" value="C:DNA-directed RNA polymerase complex"/>
    <property type="evidence" value="ECO:0007669"/>
    <property type="project" value="UniProtKB-KW"/>
</dbReference>
<dbReference type="GO" id="GO:0003677">
    <property type="term" value="F:DNA binding"/>
    <property type="evidence" value="ECO:0007669"/>
    <property type="project" value="UniProtKB-UniRule"/>
</dbReference>
<dbReference type="GO" id="GO:0003899">
    <property type="term" value="F:DNA-directed RNA polymerase activity"/>
    <property type="evidence" value="ECO:0007669"/>
    <property type="project" value="UniProtKB-UniRule"/>
</dbReference>
<dbReference type="GO" id="GO:0032549">
    <property type="term" value="F:ribonucleoside binding"/>
    <property type="evidence" value="ECO:0007669"/>
    <property type="project" value="InterPro"/>
</dbReference>
<dbReference type="GO" id="GO:0006351">
    <property type="term" value="P:DNA-templated transcription"/>
    <property type="evidence" value="ECO:0007669"/>
    <property type="project" value="UniProtKB-UniRule"/>
</dbReference>
<dbReference type="CDD" id="cd00653">
    <property type="entry name" value="RNA_pol_B_RPB2"/>
    <property type="match status" value="1"/>
</dbReference>
<dbReference type="FunFam" id="3.90.1800.10:FF:000001">
    <property type="entry name" value="DNA-directed RNA polymerase subunit beta"/>
    <property type="match status" value="1"/>
</dbReference>
<dbReference type="Gene3D" id="2.40.50.100">
    <property type="match status" value="1"/>
</dbReference>
<dbReference type="Gene3D" id="2.40.50.150">
    <property type="match status" value="1"/>
</dbReference>
<dbReference type="Gene3D" id="3.90.1100.10">
    <property type="match status" value="2"/>
</dbReference>
<dbReference type="Gene3D" id="2.30.150.10">
    <property type="entry name" value="DNA-directed RNA polymerase, beta subunit, external 1 domain"/>
    <property type="match status" value="1"/>
</dbReference>
<dbReference type="Gene3D" id="2.40.270.10">
    <property type="entry name" value="DNA-directed RNA polymerase, subunit 2, domain 6"/>
    <property type="match status" value="1"/>
</dbReference>
<dbReference type="Gene3D" id="3.90.1800.10">
    <property type="entry name" value="RNA polymerase alpha subunit dimerisation domain"/>
    <property type="match status" value="1"/>
</dbReference>
<dbReference type="Gene3D" id="3.90.1110.10">
    <property type="entry name" value="RNA polymerase Rpb2, domain 2"/>
    <property type="match status" value="1"/>
</dbReference>
<dbReference type="HAMAP" id="MF_01321">
    <property type="entry name" value="RNApol_bact_RpoB"/>
    <property type="match status" value="1"/>
</dbReference>
<dbReference type="InterPro" id="IPR042107">
    <property type="entry name" value="DNA-dir_RNA_pol_bsu_ext_1_sf"/>
</dbReference>
<dbReference type="InterPro" id="IPR019462">
    <property type="entry name" value="DNA-dir_RNA_pol_bsu_external_1"/>
</dbReference>
<dbReference type="InterPro" id="IPR015712">
    <property type="entry name" value="DNA-dir_RNA_pol_su2"/>
</dbReference>
<dbReference type="InterPro" id="IPR007120">
    <property type="entry name" value="DNA-dir_RNAP_su2_dom"/>
</dbReference>
<dbReference type="InterPro" id="IPR037033">
    <property type="entry name" value="DNA-dir_RNAP_su2_hyb_sf"/>
</dbReference>
<dbReference type="InterPro" id="IPR010243">
    <property type="entry name" value="RNA_pol_bsu_bac"/>
</dbReference>
<dbReference type="InterPro" id="IPR007121">
    <property type="entry name" value="RNA_pol_bsu_CS"/>
</dbReference>
<dbReference type="InterPro" id="IPR007644">
    <property type="entry name" value="RNA_pol_bsu_protrusion"/>
</dbReference>
<dbReference type="InterPro" id="IPR007642">
    <property type="entry name" value="RNA_pol_Rpb2_2"/>
</dbReference>
<dbReference type="InterPro" id="IPR037034">
    <property type="entry name" value="RNA_pol_Rpb2_2_sf"/>
</dbReference>
<dbReference type="InterPro" id="IPR007645">
    <property type="entry name" value="RNA_pol_Rpb2_3"/>
</dbReference>
<dbReference type="InterPro" id="IPR007641">
    <property type="entry name" value="RNA_pol_Rpb2_7"/>
</dbReference>
<dbReference type="InterPro" id="IPR014724">
    <property type="entry name" value="RNA_pol_RPB2_OB-fold"/>
</dbReference>
<dbReference type="NCBIfam" id="NF001616">
    <property type="entry name" value="PRK00405.1"/>
    <property type="match status" value="1"/>
</dbReference>
<dbReference type="NCBIfam" id="TIGR02013">
    <property type="entry name" value="rpoB"/>
    <property type="match status" value="1"/>
</dbReference>
<dbReference type="PANTHER" id="PTHR20856">
    <property type="entry name" value="DNA-DIRECTED RNA POLYMERASE I SUBUNIT 2"/>
    <property type="match status" value="1"/>
</dbReference>
<dbReference type="Pfam" id="PF04563">
    <property type="entry name" value="RNA_pol_Rpb2_1"/>
    <property type="match status" value="1"/>
</dbReference>
<dbReference type="Pfam" id="PF04561">
    <property type="entry name" value="RNA_pol_Rpb2_2"/>
    <property type="match status" value="2"/>
</dbReference>
<dbReference type="Pfam" id="PF04565">
    <property type="entry name" value="RNA_pol_Rpb2_3"/>
    <property type="match status" value="1"/>
</dbReference>
<dbReference type="Pfam" id="PF10385">
    <property type="entry name" value="RNA_pol_Rpb2_45"/>
    <property type="match status" value="1"/>
</dbReference>
<dbReference type="Pfam" id="PF00562">
    <property type="entry name" value="RNA_pol_Rpb2_6"/>
    <property type="match status" value="1"/>
</dbReference>
<dbReference type="Pfam" id="PF04560">
    <property type="entry name" value="RNA_pol_Rpb2_7"/>
    <property type="match status" value="1"/>
</dbReference>
<dbReference type="SUPFAM" id="SSF64484">
    <property type="entry name" value="beta and beta-prime subunits of DNA dependent RNA-polymerase"/>
    <property type="match status" value="1"/>
</dbReference>
<dbReference type="PROSITE" id="PS01166">
    <property type="entry name" value="RNA_POL_BETA"/>
    <property type="match status" value="1"/>
</dbReference>
<organism>
    <name type="scientific">Sorangium cellulosum (strain So ce56)</name>
    <name type="common">Polyangium cellulosum (strain So ce56)</name>
    <dbReference type="NCBI Taxonomy" id="448385"/>
    <lineage>
        <taxon>Bacteria</taxon>
        <taxon>Pseudomonadati</taxon>
        <taxon>Myxococcota</taxon>
        <taxon>Polyangia</taxon>
        <taxon>Polyangiales</taxon>
        <taxon>Polyangiaceae</taxon>
        <taxon>Sorangium</taxon>
    </lineage>
</organism>